<dbReference type="EMBL" id="AF034975">
    <property type="protein sequence ID" value="AAD04654.1"/>
    <property type="molecule type" value="Genomic_DNA"/>
</dbReference>
<dbReference type="SMR" id="O48428"/>
<dbReference type="InterPro" id="IPR010454">
    <property type="entry name" value="Phage_NinH"/>
</dbReference>
<dbReference type="Pfam" id="PF06322">
    <property type="entry name" value="Phage_NinH"/>
    <property type="match status" value="1"/>
</dbReference>
<reference key="1">
    <citation type="journal article" date="1998" name="Mol. Microbiol.">
        <title>Functional and genetic analysis of regulatory regions of coliphage H-19B: location of shiga-like toxin and lysis genes suggest a role for phage functions in toxin release.</title>
        <authorList>
            <person name="Neely M.N."/>
            <person name="Friedman D.I."/>
        </authorList>
    </citation>
    <scope>NUCLEOTIDE SEQUENCE [GENOMIC DNA]</scope>
</reference>
<evidence type="ECO:0000305" key="1"/>
<proteinExistence type="inferred from homology"/>
<organismHost>
    <name type="scientific">Escherichia coli</name>
    <dbReference type="NCBI Taxonomy" id="562"/>
</organismHost>
<sequence length="64" mass="7148">MTFTVKTIPDMLLEAYGNQSEVARILNCNRATVRKYIGDKEGKKHAVVNGVLMVHRGWGKDTDA</sequence>
<name>NINH_BPH19</name>
<gene>
    <name type="primary">ninH</name>
</gene>
<feature type="chain" id="PRO_0000077634" description="Protein ninH">
    <location>
        <begin position="1"/>
        <end position="64"/>
    </location>
</feature>
<protein>
    <recommendedName>
        <fullName>Protein ninH</fullName>
    </recommendedName>
</protein>
<comment type="similarity">
    <text evidence="1">Belongs to the ninH family.</text>
</comment>
<accession>O48428</accession>
<organism>
    <name type="scientific">Enterobacteria phage H19B</name>
    <name type="common">Bacteriophage H19B</name>
    <dbReference type="NCBI Taxonomy" id="69932"/>
    <lineage>
        <taxon>Viruses</taxon>
        <taxon>Duplodnaviria</taxon>
        <taxon>Heunggongvirae</taxon>
        <taxon>Uroviricota</taxon>
        <taxon>Caudoviricetes</taxon>
        <taxon>Lambdavirus</taxon>
    </lineage>
</organism>